<comment type="function">
    <text evidence="2 5 6 7">Removes the secondary (acyloxyacyl-linked) fatty acyl chains from the lipid A region of bacterial lipopolysaccharides (PubMed:1883828, PubMed:29343645, PubMed:8089145). By breaking down LPS, terminates the host response to bacterial infection and prevents prolonged and damaging inflammatory responses (By similarity). In peritoneal macrophages, seems to be important for recovery from a state of immune tolerance following infection by Gram-negative bacteria (By similarity).</text>
</comment>
<comment type="catalytic activity">
    <reaction evidence="5 6 7">
        <text>a 3-(acyloxy)acyl derivative of bacterial toxin + H2O = a 3-hydroxyacyl derivative of bacterial toxin + a fatty acid + H(+)</text>
        <dbReference type="Rhea" id="RHEA:12032"/>
        <dbReference type="ChEBI" id="CHEBI:15377"/>
        <dbReference type="ChEBI" id="CHEBI:15378"/>
        <dbReference type="ChEBI" id="CHEBI:28868"/>
        <dbReference type="ChEBI" id="CHEBI:136853"/>
        <dbReference type="ChEBI" id="CHEBI:140675"/>
        <dbReference type="EC" id="3.1.1.77"/>
    </reaction>
</comment>
<comment type="cofactor">
    <cofactor evidence="6">
        <name>Ca(2+)</name>
        <dbReference type="ChEBI" id="CHEBI:29108"/>
    </cofactor>
    <text evidence="6">Binds 3 Ca(2+) ions per subunit. The calcium ions probably have a structural role.</text>
</comment>
<comment type="activity regulation">
    <text evidence="6">Inhibited by EDTA.</text>
</comment>
<comment type="subunit">
    <text evidence="5 6 7">Heterodimer of the large and small subunits; disulfide-linked.</text>
</comment>
<comment type="interaction">
    <interactant intactId="EBI-1222067">
        <id>P28039</id>
    </interactant>
    <interactant intactId="EBI-80426">
        <id>Q15700</id>
        <label>DLG2</label>
    </interactant>
    <organismsDiffer>false</organismsDiffer>
    <experiments>3</experiments>
</comment>
<comment type="subcellular location">
    <subcellularLocation>
        <location evidence="7 12">Secreted</location>
    </subcellularLocation>
    <subcellularLocation>
        <location evidence="7">Cytoplasmic vesicle</location>
    </subcellularLocation>
    <text evidence="2">Detected in urine.</text>
</comment>
<comment type="alternative products">
    <event type="alternative splicing"/>
    <isoform>
        <id>P28039-1</id>
        <name>1</name>
        <sequence type="displayed"/>
    </isoform>
    <isoform>
        <id>P28039-2</id>
        <name>2</name>
        <sequence type="described" ref="VSP_042571"/>
    </isoform>
</comment>
<comment type="PTM">
    <text evidence="5 6 7">Cleaved into a large and a small subunit.</text>
</comment>
<comment type="PTM">
    <text evidence="7">The small subunit is N-glycosylated.</text>
</comment>
<accession>P28039</accession>
<accession>A4D1Y5</accession>
<accession>B7Z490</accession>
<accession>Q53F13</accession>
<proteinExistence type="evidence at protein level"/>
<organism>
    <name type="scientific">Homo sapiens</name>
    <name type="common">Human</name>
    <dbReference type="NCBI Taxonomy" id="9606"/>
    <lineage>
        <taxon>Eukaryota</taxon>
        <taxon>Metazoa</taxon>
        <taxon>Chordata</taxon>
        <taxon>Craniata</taxon>
        <taxon>Vertebrata</taxon>
        <taxon>Euteleostomi</taxon>
        <taxon>Mammalia</taxon>
        <taxon>Eutheria</taxon>
        <taxon>Euarchontoglires</taxon>
        <taxon>Primates</taxon>
        <taxon>Haplorrhini</taxon>
        <taxon>Catarrhini</taxon>
        <taxon>Hominidae</taxon>
        <taxon>Homo</taxon>
    </lineage>
</organism>
<sequence length="575" mass="65105">MQSPWKILTVAPLFLLLSLQSSASPANDDQSRPSLSNGHTCVGCVLVVSVIEQLAQVHNSTVQASMERLCSYLPEKLFLKTTCYLVIDKFGSDIIKLLSADMNADVVCHTLEFCKQNTGQPLCHLYPLPKETWKFTLQKARQIVKKSPILKYSRSGSDICSLPVLAKICQKIKLAMEQSVPFKDVDSDKYSVFPTLRGYHWRGRDCNDSDESVYPGRRPNNWDVHQDSNCNGIWGVDPKDGVPYEKKFCEGSQPRGIILLGDSAGAHFHISPEWITASQMSLNSFINLPTALTNELDWPQLSGATGFLDSTVGIKEKSIYLRLWKRNHCNHRDYQNISRNGASSRNLKKFIESLSRNKVLDYPAIVIYAMIGNDVCSGKSDPVPAMTTPEKLYSNVMQTLKHLNSHLPNGSHVILYGLPDGTFLWDNLHNRYHPLGQLNKDMTYAQLYSFLNCLQVSPCHGWMSSNKTLRTLTSERAEQLSNTLKKIAASEKFTNFNLFYMDFAFHEIIQEWQKRGGQPWQLIEPVDGFHPNEVALLLLADHFWKKVQLQWPQILGKENPFNPQIKQVFGDQGGH</sequence>
<keyword id="KW-0002">3D-structure</keyword>
<keyword id="KW-0025">Alternative splicing</keyword>
<keyword id="KW-0106">Calcium</keyword>
<keyword id="KW-0968">Cytoplasmic vesicle</keyword>
<keyword id="KW-0903">Direct protein sequencing</keyword>
<keyword id="KW-1015">Disulfide bond</keyword>
<keyword id="KW-0325">Glycoprotein</keyword>
<keyword id="KW-0378">Hydrolase</keyword>
<keyword id="KW-0443">Lipid metabolism</keyword>
<keyword id="KW-0479">Metal-binding</keyword>
<keyword id="KW-1267">Proteomics identification</keyword>
<keyword id="KW-1185">Reference proteome</keyword>
<keyword id="KW-0964">Secreted</keyword>
<keyword id="KW-0732">Signal</keyword>
<keyword id="KW-0865">Zymogen</keyword>
<name>AOAH_HUMAN</name>
<dbReference type="EC" id="3.1.1.77" evidence="5 6 7"/>
<dbReference type="EMBL" id="M62840">
    <property type="protein sequence ID" value="AAA35506.1"/>
    <property type="molecule type" value="mRNA"/>
</dbReference>
<dbReference type="EMBL" id="AK297016">
    <property type="protein sequence ID" value="BAH12476.1"/>
    <property type="molecule type" value="mRNA"/>
</dbReference>
<dbReference type="EMBL" id="AK223476">
    <property type="protein sequence ID" value="BAD97196.1"/>
    <property type="molecule type" value="mRNA"/>
</dbReference>
<dbReference type="EMBL" id="AC083876">
    <property type="status" value="NOT_ANNOTATED_CDS"/>
    <property type="molecule type" value="Genomic_DNA"/>
</dbReference>
<dbReference type="EMBL" id="AC087069">
    <property type="status" value="NOT_ANNOTATED_CDS"/>
    <property type="molecule type" value="Genomic_DNA"/>
</dbReference>
<dbReference type="EMBL" id="CH236951">
    <property type="protein sequence ID" value="EAL23977.1"/>
    <property type="molecule type" value="Genomic_DNA"/>
</dbReference>
<dbReference type="EMBL" id="CH471073">
    <property type="protein sequence ID" value="EAW94073.1"/>
    <property type="molecule type" value="Genomic_DNA"/>
</dbReference>
<dbReference type="EMBL" id="BC025698">
    <property type="protein sequence ID" value="AAH25698.1"/>
    <property type="molecule type" value="mRNA"/>
</dbReference>
<dbReference type="CCDS" id="CCDS5448.1">
    <molecule id="P28039-1"/>
</dbReference>
<dbReference type="CCDS" id="CCDS55102.1">
    <molecule id="P28039-2"/>
</dbReference>
<dbReference type="PIR" id="A40292">
    <property type="entry name" value="A40292"/>
</dbReference>
<dbReference type="RefSeq" id="NP_001170977.1">
    <property type="nucleotide sequence ID" value="NM_001177506.1"/>
</dbReference>
<dbReference type="RefSeq" id="NP_001170978.1">
    <molecule id="P28039-2"/>
    <property type="nucleotide sequence ID" value="NM_001177507.2"/>
</dbReference>
<dbReference type="RefSeq" id="NP_001628.1">
    <molecule id="P28039-1"/>
    <property type="nucleotide sequence ID" value="NM_001637.4"/>
</dbReference>
<dbReference type="PDB" id="5W78">
    <property type="method" value="X-ray"/>
    <property type="resolution" value="2.27 A"/>
    <property type="chains" value="A=24-152, B=153-575"/>
</dbReference>
<dbReference type="PDB" id="5W7C">
    <property type="method" value="X-ray"/>
    <property type="resolution" value="2.23 A"/>
    <property type="chains" value="A/B=24-152, C/D=153-575"/>
</dbReference>
<dbReference type="PDBsum" id="5W78"/>
<dbReference type="PDBsum" id="5W7C"/>
<dbReference type="SMR" id="P28039"/>
<dbReference type="BioGRID" id="106810">
    <property type="interactions" value="2"/>
</dbReference>
<dbReference type="FunCoup" id="P28039">
    <property type="interactions" value="65"/>
</dbReference>
<dbReference type="IntAct" id="P28039">
    <property type="interactions" value="2"/>
</dbReference>
<dbReference type="STRING" id="9606.ENSP00000479664"/>
<dbReference type="GuidetoPHARMACOLOGY" id="2873"/>
<dbReference type="GlyCosmos" id="P28039">
    <property type="glycosylation" value="4 sites, No reported glycans"/>
</dbReference>
<dbReference type="GlyGen" id="P28039">
    <property type="glycosylation" value="4 sites, 5 N-linked glycans (1 site)"/>
</dbReference>
<dbReference type="iPTMnet" id="P28039"/>
<dbReference type="PhosphoSitePlus" id="P28039"/>
<dbReference type="BioMuta" id="AOAH"/>
<dbReference type="DMDM" id="113976"/>
<dbReference type="jPOST" id="P28039"/>
<dbReference type="MassIVE" id="P28039"/>
<dbReference type="PaxDb" id="9606-ENSP00000479664"/>
<dbReference type="PeptideAtlas" id="P28039"/>
<dbReference type="ProteomicsDB" id="54435">
    <molecule id="P28039-1"/>
</dbReference>
<dbReference type="ProteomicsDB" id="54436">
    <molecule id="P28039-2"/>
</dbReference>
<dbReference type="Antibodypedia" id="26560">
    <property type="antibodies" value="146 antibodies from 24 providers"/>
</dbReference>
<dbReference type="DNASU" id="313"/>
<dbReference type="Ensembl" id="ENST00000612871.4">
    <molecule id="P28039-2"/>
    <property type="protein sequence ID" value="ENSP00000484305.1"/>
    <property type="gene ID" value="ENSG00000136250.13"/>
</dbReference>
<dbReference type="Ensembl" id="ENST00000617537.5">
    <molecule id="P28039-1"/>
    <property type="protein sequence ID" value="ENSP00000483783.1"/>
    <property type="gene ID" value="ENSG00000136250.13"/>
</dbReference>
<dbReference type="GeneID" id="313"/>
<dbReference type="KEGG" id="hsa:313"/>
<dbReference type="MANE-Select" id="ENST00000617537.5">
    <property type="protein sequence ID" value="ENSP00000483783.1"/>
    <property type="RefSeq nucleotide sequence ID" value="NM_001637.4"/>
    <property type="RefSeq protein sequence ID" value="NP_001628.1"/>
</dbReference>
<dbReference type="UCSC" id="uc032zjw.2">
    <molecule id="P28039-1"/>
    <property type="organism name" value="human"/>
</dbReference>
<dbReference type="AGR" id="HGNC:548"/>
<dbReference type="CTD" id="313"/>
<dbReference type="DisGeNET" id="313"/>
<dbReference type="GeneCards" id="AOAH"/>
<dbReference type="HGNC" id="HGNC:548">
    <property type="gene designation" value="AOAH"/>
</dbReference>
<dbReference type="HPA" id="ENSG00000136250">
    <property type="expression patterns" value="Tissue enhanced (bone marrow, lymphoid tissue)"/>
</dbReference>
<dbReference type="MalaCards" id="AOAH"/>
<dbReference type="MIM" id="102593">
    <property type="type" value="gene"/>
</dbReference>
<dbReference type="neXtProt" id="NX_P28039"/>
<dbReference type="OpenTargets" id="ENSG00000136250"/>
<dbReference type="PharmGKB" id="PA24838"/>
<dbReference type="VEuPathDB" id="HostDB:ENSG00000136250"/>
<dbReference type="eggNOG" id="ENOG502QVQW">
    <property type="taxonomic scope" value="Eukaryota"/>
</dbReference>
<dbReference type="GeneTree" id="ENSGT00390000008427"/>
<dbReference type="HOGENOM" id="CLU_025769_0_0_1"/>
<dbReference type="InParanoid" id="P28039"/>
<dbReference type="OMA" id="PFCHLYP"/>
<dbReference type="OrthoDB" id="14839at2759"/>
<dbReference type="PAN-GO" id="P28039">
    <property type="GO annotations" value="4 GO annotations based on evolutionary models"/>
</dbReference>
<dbReference type="PhylomeDB" id="P28039"/>
<dbReference type="TreeFam" id="TF329246"/>
<dbReference type="BRENDA" id="3.1.1.77">
    <property type="organism ID" value="2681"/>
</dbReference>
<dbReference type="PathwayCommons" id="P28039"/>
<dbReference type="SignaLink" id="P28039"/>
<dbReference type="BioGRID-ORCS" id="313">
    <property type="hits" value="21 hits in 1155 CRISPR screens"/>
</dbReference>
<dbReference type="ChiTaRS" id="AOAH">
    <property type="organism name" value="human"/>
</dbReference>
<dbReference type="GeneWiki" id="AOAH"/>
<dbReference type="GenomeRNAi" id="313"/>
<dbReference type="Pharos" id="P28039">
    <property type="development level" value="Tchem"/>
</dbReference>
<dbReference type="PRO" id="PR:P28039"/>
<dbReference type="Proteomes" id="UP000005640">
    <property type="component" value="Chromosome 7"/>
</dbReference>
<dbReference type="RNAct" id="P28039">
    <property type="molecule type" value="protein"/>
</dbReference>
<dbReference type="Bgee" id="ENSG00000136250">
    <property type="expression patterns" value="Expressed in granulocyte and 141 other cell types or tissues"/>
</dbReference>
<dbReference type="ExpressionAtlas" id="P28039">
    <property type="expression patterns" value="baseline and differential"/>
</dbReference>
<dbReference type="GO" id="GO:0031410">
    <property type="term" value="C:cytoplasmic vesicle"/>
    <property type="evidence" value="ECO:0007669"/>
    <property type="project" value="UniProtKB-KW"/>
</dbReference>
<dbReference type="GO" id="GO:0005576">
    <property type="term" value="C:extracellular region"/>
    <property type="evidence" value="ECO:0007669"/>
    <property type="project" value="UniProtKB-SubCell"/>
</dbReference>
<dbReference type="GO" id="GO:0050528">
    <property type="term" value="F:acyloxyacyl hydrolase activity"/>
    <property type="evidence" value="ECO:0000314"/>
    <property type="project" value="UniProtKB"/>
</dbReference>
<dbReference type="GO" id="GO:0005509">
    <property type="term" value="F:calcium ion binding"/>
    <property type="evidence" value="ECO:0000314"/>
    <property type="project" value="UniProtKB"/>
</dbReference>
<dbReference type="GO" id="GO:0006631">
    <property type="term" value="P:fatty acid metabolic process"/>
    <property type="evidence" value="ECO:0000314"/>
    <property type="project" value="UniProtKB"/>
</dbReference>
<dbReference type="GO" id="GO:0009104">
    <property type="term" value="P:lipopolysaccharide catabolic process"/>
    <property type="evidence" value="ECO:0000314"/>
    <property type="project" value="UniProtKB"/>
</dbReference>
<dbReference type="GO" id="GO:0050728">
    <property type="term" value="P:negative regulation of inflammatory response"/>
    <property type="evidence" value="ECO:0000318"/>
    <property type="project" value="GO_Central"/>
</dbReference>
<dbReference type="CDD" id="cd01826">
    <property type="entry name" value="acyloxyacyl_hydrolase_like"/>
    <property type="match status" value="1"/>
</dbReference>
<dbReference type="FunFam" id="1.10.225.10:FF:000009">
    <property type="entry name" value="Acyloxyacyl hydrolase"/>
    <property type="match status" value="1"/>
</dbReference>
<dbReference type="Gene3D" id="1.10.225.10">
    <property type="entry name" value="Saposin-like"/>
    <property type="match status" value="1"/>
</dbReference>
<dbReference type="Gene3D" id="3.40.50.1110">
    <property type="entry name" value="SGNH hydrolase"/>
    <property type="match status" value="1"/>
</dbReference>
<dbReference type="InterPro" id="IPR039676">
    <property type="entry name" value="AOAH"/>
</dbReference>
<dbReference type="InterPro" id="IPR048593">
    <property type="entry name" value="AOAH_Saposin_N"/>
</dbReference>
<dbReference type="InterPro" id="IPR001087">
    <property type="entry name" value="GDSL"/>
</dbReference>
<dbReference type="InterPro" id="IPR011001">
    <property type="entry name" value="Saposin-like"/>
</dbReference>
<dbReference type="InterPro" id="IPR008139">
    <property type="entry name" value="SaposinB_dom"/>
</dbReference>
<dbReference type="InterPro" id="IPR036514">
    <property type="entry name" value="SGNH_hydro_sf"/>
</dbReference>
<dbReference type="PANTHER" id="PTHR15010">
    <property type="entry name" value="ACYLOXYACYL HYDROLASE"/>
    <property type="match status" value="1"/>
</dbReference>
<dbReference type="PANTHER" id="PTHR15010:SF0">
    <property type="entry name" value="ACYLOXYACYL HYDROLASE"/>
    <property type="match status" value="1"/>
</dbReference>
<dbReference type="Pfam" id="PF00657">
    <property type="entry name" value="Lipase_GDSL"/>
    <property type="match status" value="1"/>
</dbReference>
<dbReference type="Pfam" id="PF20825">
    <property type="entry name" value="Saposin"/>
    <property type="match status" value="1"/>
</dbReference>
<dbReference type="SMART" id="SM00741">
    <property type="entry name" value="SapB"/>
    <property type="match status" value="1"/>
</dbReference>
<dbReference type="SUPFAM" id="SSF47862">
    <property type="entry name" value="Saposin"/>
    <property type="match status" value="1"/>
</dbReference>
<dbReference type="SUPFAM" id="SSF52266">
    <property type="entry name" value="SGNH hydrolase"/>
    <property type="match status" value="1"/>
</dbReference>
<dbReference type="PROSITE" id="PS50015">
    <property type="entry name" value="SAP_B"/>
    <property type="match status" value="1"/>
</dbReference>
<feature type="signal peptide" evidence="7">
    <location>
        <begin position="1"/>
        <end position="23"/>
    </location>
</feature>
<feature type="propeptide" id="PRO_0000020739" evidence="12">
    <location>
        <begin position="24"/>
        <end position="34"/>
    </location>
</feature>
<feature type="chain" id="PRO_0000020740" description="Acyloxyacyl hydrolase small subunit" evidence="12">
    <location>
        <begin position="35"/>
        <end position="156"/>
    </location>
</feature>
<feature type="chain" id="PRO_0000020741" description="Acyloxyacyl hydrolase large subunit" evidence="12">
    <location>
        <begin position="157"/>
        <end position="575"/>
    </location>
</feature>
<feature type="domain" description="Saposin B-type" evidence="3">
    <location>
        <begin position="37"/>
        <end position="118"/>
    </location>
</feature>
<feature type="region of interest" description="Important for enzyme activity, localization to cytoplasmic vesicles, and protein stability" evidence="7">
    <location>
        <begin position="38"/>
        <end position="70"/>
    </location>
</feature>
<feature type="region of interest" description="Lipopolysaccharide binding" evidence="1">
    <location>
        <begin position="173"/>
        <end position="177"/>
    </location>
</feature>
<feature type="active site" evidence="13 14">
    <location>
        <position position="263"/>
    </location>
</feature>
<feature type="binding site" evidence="6">
    <location>
        <position position="184"/>
    </location>
    <ligand>
        <name>Ca(2+)</name>
        <dbReference type="ChEBI" id="CHEBI:29108"/>
        <label>1</label>
    </ligand>
</feature>
<feature type="binding site" evidence="6">
    <location>
        <position position="186"/>
    </location>
    <ligand>
        <name>Ca(2+)</name>
        <dbReference type="ChEBI" id="CHEBI:29108"/>
        <label>1</label>
    </ligand>
</feature>
<feature type="binding site" evidence="6">
    <location>
        <position position="186"/>
    </location>
    <ligand>
        <name>Ca(2+)</name>
        <dbReference type="ChEBI" id="CHEBI:29108"/>
        <label>2</label>
    </ligand>
</feature>
<feature type="binding site" evidence="6">
    <location>
        <position position="188"/>
    </location>
    <ligand>
        <name>Ca(2+)</name>
        <dbReference type="ChEBI" id="CHEBI:29108"/>
        <label>1</label>
    </ligand>
</feature>
<feature type="binding site" evidence="6">
    <location>
        <position position="188"/>
    </location>
    <ligand>
        <name>Ca(2+)</name>
        <dbReference type="ChEBI" id="CHEBI:29108"/>
        <label>2</label>
    </ligand>
</feature>
<feature type="binding site" evidence="6">
    <location>
        <position position="190"/>
    </location>
    <ligand>
        <name>Ca(2+)</name>
        <dbReference type="ChEBI" id="CHEBI:29108"/>
        <label>1</label>
    </ligand>
</feature>
<feature type="binding site" evidence="6">
    <location>
        <position position="205"/>
    </location>
    <ligand>
        <name>Ca(2+)</name>
        <dbReference type="ChEBI" id="CHEBI:29108"/>
        <label>1</label>
    </ligand>
</feature>
<feature type="binding site" evidence="6">
    <location>
        <position position="205"/>
    </location>
    <ligand>
        <name>Ca(2+)</name>
        <dbReference type="ChEBI" id="CHEBI:29108"/>
        <label>2</label>
    </ligand>
</feature>
<feature type="binding site" evidence="6">
    <location>
        <position position="207"/>
    </location>
    <ligand>
        <name>Ca(2+)</name>
        <dbReference type="ChEBI" id="CHEBI:29108"/>
        <label>2</label>
    </ligand>
</feature>
<feature type="binding site" evidence="6">
    <location>
        <position position="208"/>
    </location>
    <ligand>
        <name>Ca(2+)</name>
        <dbReference type="ChEBI" id="CHEBI:29108"/>
        <label>1</label>
    </ligand>
</feature>
<feature type="binding site" evidence="6">
    <location>
        <position position="210"/>
    </location>
    <ligand>
        <name>Ca(2+)</name>
        <dbReference type="ChEBI" id="CHEBI:29108"/>
        <label>2</label>
    </ligand>
</feature>
<feature type="binding site" evidence="6">
    <location>
        <position position="213"/>
    </location>
    <ligand>
        <name>Ca(2+)</name>
        <dbReference type="ChEBI" id="CHEBI:29108"/>
        <label>2</label>
    </ligand>
</feature>
<feature type="binding site" evidence="6">
    <location>
        <position position="223"/>
    </location>
    <ligand>
        <name>Ca(2+)</name>
        <dbReference type="ChEBI" id="CHEBI:29108"/>
        <label>3</label>
    </ligand>
</feature>
<feature type="binding site" evidence="6">
    <location>
        <position position="227"/>
    </location>
    <ligand>
        <name>Ca(2+)</name>
        <dbReference type="ChEBI" id="CHEBI:29108"/>
        <label>3</label>
    </ligand>
</feature>
<feature type="binding site" evidence="6">
    <location>
        <position position="229"/>
    </location>
    <ligand>
        <name>Ca(2+)</name>
        <dbReference type="ChEBI" id="CHEBI:29108"/>
        <label>3</label>
    </ligand>
</feature>
<feature type="binding site" evidence="6">
    <location>
        <position position="231"/>
    </location>
    <ligand>
        <name>Ca(2+)</name>
        <dbReference type="ChEBI" id="CHEBI:29108"/>
        <label>3</label>
    </ligand>
</feature>
<feature type="binding site" evidence="6">
    <location>
        <position position="233"/>
    </location>
    <ligand>
        <name>Ca(2+)</name>
        <dbReference type="ChEBI" id="CHEBI:29108"/>
        <label>3</label>
    </ligand>
</feature>
<feature type="binding site" evidence="6">
    <location>
        <position position="245"/>
    </location>
    <ligand>
        <name>Ca(2+)</name>
        <dbReference type="ChEBI" id="CHEBI:29108"/>
        <label>3</label>
    </ligand>
</feature>
<feature type="site" description="Interacts with lipopolysaccharide" evidence="1">
    <location>
        <position position="345"/>
    </location>
</feature>
<feature type="glycosylation site" description="N-linked (GlcNAc...) asparagine" evidence="6 14 15">
    <location>
        <position position="59"/>
    </location>
</feature>
<feature type="glycosylation site" description="N-linked (GlcNAc...) asparagine" evidence="6 15">
    <location>
        <position position="207"/>
    </location>
</feature>
<feature type="glycosylation site" description="N-linked (GlcNAc...) asparagine" evidence="6 15">
    <location>
        <position position="409"/>
    </location>
</feature>
<feature type="glycosylation site" description="N-linked (GlcNAc...) asparagine" evidence="6 15">
    <location>
        <position position="466"/>
    </location>
</feature>
<feature type="disulfide bond" evidence="3 6 15 16">
    <location>
        <begin position="41"/>
        <end position="114"/>
    </location>
</feature>
<feature type="disulfide bond" evidence="3 6 15 16">
    <location>
        <begin position="44"/>
        <end position="108"/>
    </location>
</feature>
<feature type="disulfide bond" evidence="3 6 15 16">
    <location>
        <begin position="70"/>
        <end position="83"/>
    </location>
</feature>
<feature type="disulfide bond" description="Interchain (between small and large subunit)" evidence="6 15 16">
    <location>
        <begin position="123"/>
        <end position="453"/>
    </location>
</feature>
<feature type="disulfide bond" evidence="6 15 16">
    <location>
        <begin position="160"/>
        <end position="169"/>
    </location>
</feature>
<feature type="disulfide bond" evidence="6 15 16">
    <location>
        <begin position="206"/>
        <end position="230"/>
    </location>
</feature>
<feature type="disulfide bond" evidence="6 15 16">
    <location>
        <begin position="249"/>
        <end position="329"/>
    </location>
</feature>
<feature type="disulfide bond" evidence="6 15 16">
    <location>
        <begin position="376"/>
        <end position="459"/>
    </location>
</feature>
<feature type="splice variant" id="VSP_042571" description="In isoform 2." evidence="9">
    <location>
        <begin position="43"/>
        <end position="74"/>
    </location>
</feature>
<feature type="sequence variant" id="VAR_050663" description="In dbSNP:rs2228410." evidence="4 8">
    <original>D</original>
    <variation>N</variation>
    <location>
        <position position="28"/>
    </location>
</feature>
<feature type="sequence variant" id="VAR_020133" description="In dbSNP:rs3735384.">
    <original>A</original>
    <variation>T</variation>
    <location>
        <position position="166"/>
    </location>
</feature>
<feature type="sequence variant" id="VAR_033513" description="In dbSNP:rs3735386.">
    <original>A</original>
    <variation>G</variation>
    <location>
        <position position="266"/>
    </location>
</feature>
<feature type="mutagenesis site" description="Loss of glycosylation. No effect on enzyme activity or localization to cytoplasmic vesicles." evidence="7">
    <original>T</original>
    <variation>A</variation>
    <location>
        <position position="61"/>
    </location>
</feature>
<feature type="mutagenesis site" description="No effect on enzyme activity." evidence="6">
    <original>K</original>
    <variation>E</variation>
    <location>
        <position position="173"/>
    </location>
</feature>
<feature type="mutagenesis site" description="Loss of enzyme activity." evidence="6">
    <original>S</original>
    <variation>A</variation>
    <location>
        <position position="263"/>
    </location>
</feature>
<feature type="mutagenesis site" description="Nearly abolishes catalytic activity." evidence="7">
    <original>S</original>
    <variation>L</variation>
    <location>
        <position position="263"/>
    </location>
</feature>
<feature type="mutagenesis site" description="No effect on enzyme activity; when associated with E-379." evidence="6">
    <original>R</original>
    <variation>E</variation>
    <location>
        <position position="345"/>
    </location>
</feature>
<feature type="mutagenesis site" description="Loss of enzyme activity with lipopolysaccharide, due to steric hindrance. No effect on activity with small, synthetic substrate." evidence="6">
    <original>G</original>
    <variation>M</variation>
    <location>
        <position position="372"/>
    </location>
</feature>
<feature type="mutagenesis site" description="No effect on enzyme activity; when associated with E-345." evidence="6">
    <original>K</original>
    <variation>E</variation>
    <location>
        <position position="379"/>
    </location>
</feature>
<feature type="mutagenesis site" description="Loss of enzyme activity with lipopolysaccharide, due to steric hindrance. No effect on activity with small, synthetic substrate." evidence="6">
    <original>P</original>
    <variation>M</variation>
    <location>
        <position position="419"/>
    </location>
</feature>
<feature type="sequence conflict" description="In Ref. 6; BAD97196." evidence="11" ref="6">
    <original>W</original>
    <variation>C</variation>
    <location>
        <position position="222"/>
    </location>
</feature>
<feature type="helix" evidence="18">
    <location>
        <begin position="38"/>
        <end position="57"/>
    </location>
</feature>
<feature type="helix" evidence="18">
    <location>
        <begin position="62"/>
        <end position="72"/>
    </location>
</feature>
<feature type="helix" evidence="18">
    <location>
        <begin position="76"/>
        <end position="78"/>
    </location>
</feature>
<feature type="helix" evidence="18">
    <location>
        <begin position="79"/>
        <end position="99"/>
    </location>
</feature>
<feature type="helix" evidence="18">
    <location>
        <begin position="104"/>
        <end position="110"/>
    </location>
</feature>
<feature type="strand" evidence="17">
    <location>
        <begin position="118"/>
        <end position="120"/>
    </location>
</feature>
<feature type="helix" evidence="18">
    <location>
        <begin position="130"/>
        <end position="143"/>
    </location>
</feature>
<feature type="helix" evidence="18">
    <location>
        <begin position="159"/>
        <end position="161"/>
    </location>
</feature>
<feature type="helix" evidence="18">
    <location>
        <begin position="165"/>
        <end position="178"/>
    </location>
</feature>
<feature type="strand" evidence="18">
    <location>
        <begin position="192"/>
        <end position="198"/>
    </location>
</feature>
<feature type="turn" evidence="18">
    <location>
        <begin position="199"/>
        <end position="201"/>
    </location>
</feature>
<feature type="helix" evidence="18">
    <location>
        <begin position="221"/>
        <end position="223"/>
    </location>
</feature>
<feature type="strand" evidence="18">
    <location>
        <begin position="224"/>
        <end position="226"/>
    </location>
</feature>
<feature type="strand" evidence="18">
    <location>
        <begin position="230"/>
        <end position="232"/>
    </location>
</feature>
<feature type="turn" evidence="18">
    <location>
        <begin position="238"/>
        <end position="240"/>
    </location>
</feature>
<feature type="helix" evidence="18">
    <location>
        <begin position="244"/>
        <end position="249"/>
    </location>
</feature>
<feature type="strand" evidence="18">
    <location>
        <begin position="256"/>
        <end position="261"/>
    </location>
</feature>
<feature type="turn" evidence="18">
    <location>
        <begin position="263"/>
        <end position="267"/>
    </location>
</feature>
<feature type="helix" evidence="18">
    <location>
        <begin position="272"/>
        <end position="274"/>
    </location>
</feature>
<feature type="helix" evidence="18">
    <location>
        <begin position="277"/>
        <end position="279"/>
    </location>
</feature>
<feature type="helix" evidence="18">
    <location>
        <begin position="282"/>
        <end position="285"/>
    </location>
</feature>
<feature type="helix" evidence="18">
    <location>
        <begin position="288"/>
        <end position="293"/>
    </location>
</feature>
<feature type="turn" evidence="18">
    <location>
        <begin position="294"/>
        <end position="296"/>
    </location>
</feature>
<feature type="helix" evidence="18">
    <location>
        <begin position="299"/>
        <end position="301"/>
    </location>
</feature>
<feature type="turn" evidence="18">
    <location>
        <begin position="303"/>
        <end position="305"/>
    </location>
</feature>
<feature type="strand" evidence="18">
    <location>
        <begin position="311"/>
        <end position="313"/>
    </location>
</feature>
<feature type="helix" evidence="18">
    <location>
        <begin position="319"/>
        <end position="326"/>
    </location>
</feature>
<feature type="helix" evidence="18">
    <location>
        <begin position="328"/>
        <end position="330"/>
    </location>
</feature>
<feature type="strand" evidence="18">
    <location>
        <begin position="334"/>
        <end position="338"/>
    </location>
</feature>
<feature type="turn" evidence="18">
    <location>
        <begin position="344"/>
        <end position="346"/>
    </location>
</feature>
<feature type="helix" evidence="18">
    <location>
        <begin position="347"/>
        <end position="349"/>
    </location>
</feature>
<feature type="helix" evidence="18">
    <location>
        <begin position="351"/>
        <end position="353"/>
    </location>
</feature>
<feature type="turn" evidence="18">
    <location>
        <begin position="358"/>
        <end position="360"/>
    </location>
</feature>
<feature type="strand" evidence="18">
    <location>
        <begin position="364"/>
        <end position="369"/>
    </location>
</feature>
<feature type="turn" evidence="18">
    <location>
        <begin position="373"/>
        <end position="375"/>
    </location>
</feature>
<feature type="strand" evidence="18">
    <location>
        <begin position="379"/>
        <end position="381"/>
    </location>
</feature>
<feature type="turn" evidence="18">
    <location>
        <begin position="383"/>
        <end position="385"/>
    </location>
</feature>
<feature type="helix" evidence="18">
    <location>
        <begin position="389"/>
        <end position="404"/>
    </location>
</feature>
<feature type="strand" evidence="18">
    <location>
        <begin position="411"/>
        <end position="416"/>
    </location>
</feature>
<feature type="helix" evidence="18">
    <location>
        <begin position="423"/>
        <end position="428"/>
    </location>
</feature>
<feature type="helix" evidence="18">
    <location>
        <begin position="434"/>
        <end position="436"/>
    </location>
</feature>
<feature type="turn" evidence="18">
    <location>
        <begin position="437"/>
        <end position="440"/>
    </location>
</feature>
<feature type="helix" evidence="18">
    <location>
        <begin position="444"/>
        <end position="454"/>
    </location>
</feature>
<feature type="turn" evidence="18">
    <location>
        <begin position="460"/>
        <end position="462"/>
    </location>
</feature>
<feature type="strand" evidence="18">
    <location>
        <begin position="463"/>
        <end position="465"/>
    </location>
</feature>
<feature type="helix" evidence="18">
    <location>
        <begin position="467"/>
        <end position="490"/>
    </location>
</feature>
<feature type="strand" evidence="18">
    <location>
        <begin position="496"/>
        <end position="501"/>
    </location>
</feature>
<feature type="helix" evidence="18">
    <location>
        <begin position="505"/>
        <end position="514"/>
    </location>
</feature>
<feature type="helix" evidence="18">
    <location>
        <begin position="519"/>
        <end position="522"/>
    </location>
</feature>
<feature type="turn" evidence="18">
    <location>
        <begin position="525"/>
        <end position="527"/>
    </location>
</feature>
<feature type="strand" evidence="18">
    <location>
        <begin position="528"/>
        <end position="531"/>
    </location>
</feature>
<feature type="helix" evidence="18">
    <location>
        <begin position="533"/>
        <end position="550"/>
    </location>
</feature>
<feature type="helix" evidence="18">
    <location>
        <begin position="552"/>
        <end position="555"/>
    </location>
</feature>
<feature type="helix" evidence="18">
    <location>
        <begin position="562"/>
        <end position="569"/>
    </location>
</feature>
<feature type="turn" evidence="18">
    <location>
        <begin position="570"/>
        <end position="573"/>
    </location>
</feature>
<gene>
    <name evidence="10" type="primary">AOAH</name>
</gene>
<protein>
    <recommendedName>
        <fullName evidence="10">Acyloxyacyl hydrolase</fullName>
        <ecNumber evidence="5 6 7">3.1.1.77</ecNumber>
    </recommendedName>
    <component>
        <recommendedName>
            <fullName evidence="10">Acyloxyacyl hydrolase small subunit</fullName>
        </recommendedName>
    </component>
    <component>
        <recommendedName>
            <fullName evidence="10">Acyloxyacyl hydrolase large subunit</fullName>
        </recommendedName>
    </component>
</protein>
<evidence type="ECO:0000250" key="1">
    <source>
        <dbReference type="UniProtKB" id="O18823"/>
    </source>
</evidence>
<evidence type="ECO:0000250" key="2">
    <source>
        <dbReference type="UniProtKB" id="O35298"/>
    </source>
</evidence>
<evidence type="ECO:0000255" key="3">
    <source>
        <dbReference type="PROSITE-ProRule" id="PRU00415"/>
    </source>
</evidence>
<evidence type="ECO:0000269" key="4">
    <source>
    </source>
</evidence>
<evidence type="ECO:0000269" key="5">
    <source>
    </source>
</evidence>
<evidence type="ECO:0000269" key="6">
    <source>
    </source>
</evidence>
<evidence type="ECO:0000269" key="7">
    <source>
    </source>
</evidence>
<evidence type="ECO:0000269" key="8">
    <source ref="6"/>
</evidence>
<evidence type="ECO:0000303" key="9">
    <source>
    </source>
</evidence>
<evidence type="ECO:0000303" key="10">
    <source>
    </source>
</evidence>
<evidence type="ECO:0000305" key="11"/>
<evidence type="ECO:0000305" key="12">
    <source>
    </source>
</evidence>
<evidence type="ECO:0000305" key="13">
    <source>
    </source>
</evidence>
<evidence type="ECO:0000305" key="14">
    <source>
    </source>
</evidence>
<evidence type="ECO:0007744" key="15">
    <source>
        <dbReference type="PDB" id="5W78"/>
    </source>
</evidence>
<evidence type="ECO:0007744" key="16">
    <source>
        <dbReference type="PDB" id="5W7C"/>
    </source>
</evidence>
<evidence type="ECO:0007829" key="17">
    <source>
        <dbReference type="PDB" id="5W78"/>
    </source>
</evidence>
<evidence type="ECO:0007829" key="18">
    <source>
        <dbReference type="PDB" id="5W7C"/>
    </source>
</evidence>
<reference key="1">
    <citation type="journal article" date="1991" name="Biochemistry">
        <title>Expression and characterization of recombinant human acyloxyacyl hydrolase, a leukocyte enzyme that deacylates bacterial lipopolysaccharides.</title>
        <authorList>
            <person name="Hagen F.S."/>
            <person name="Grant F.J."/>
            <person name="Kuijper J.L."/>
            <person name="Slaughter C.A."/>
            <person name="Moomaw C.R."/>
            <person name="Orth K."/>
            <person name="O'Hara P.J."/>
            <person name="Munford R.S."/>
        </authorList>
    </citation>
    <scope>NUCLEOTIDE SEQUENCE [MRNA] (ISOFORM 1)</scope>
    <scope>PROTEIN SEQUENCE OF 35-49 AND 157-185</scope>
    <scope>FUNCTION</scope>
    <scope>CATALYTIC ACTIVITY</scope>
    <scope>SUBUNIT</scope>
    <scope>PROTEOLYTIC CLEAVAGE</scope>
    <scope>SUBCELLULAR LOCATION</scope>
</reference>
<reference key="2">
    <citation type="journal article" date="2004" name="Nat. Genet.">
        <title>Complete sequencing and characterization of 21,243 full-length human cDNAs.</title>
        <authorList>
            <person name="Ota T."/>
            <person name="Suzuki Y."/>
            <person name="Nishikawa T."/>
            <person name="Otsuki T."/>
            <person name="Sugiyama T."/>
            <person name="Irie R."/>
            <person name="Wakamatsu A."/>
            <person name="Hayashi K."/>
            <person name="Sato H."/>
            <person name="Nagai K."/>
            <person name="Kimura K."/>
            <person name="Makita H."/>
            <person name="Sekine M."/>
            <person name="Obayashi M."/>
            <person name="Nishi T."/>
            <person name="Shibahara T."/>
            <person name="Tanaka T."/>
            <person name="Ishii S."/>
            <person name="Yamamoto J."/>
            <person name="Saito K."/>
            <person name="Kawai Y."/>
            <person name="Isono Y."/>
            <person name="Nakamura Y."/>
            <person name="Nagahari K."/>
            <person name="Murakami K."/>
            <person name="Yasuda T."/>
            <person name="Iwayanagi T."/>
            <person name="Wagatsuma M."/>
            <person name="Shiratori A."/>
            <person name="Sudo H."/>
            <person name="Hosoiri T."/>
            <person name="Kaku Y."/>
            <person name="Kodaira H."/>
            <person name="Kondo H."/>
            <person name="Sugawara M."/>
            <person name="Takahashi M."/>
            <person name="Kanda K."/>
            <person name="Yokoi T."/>
            <person name="Furuya T."/>
            <person name="Kikkawa E."/>
            <person name="Omura Y."/>
            <person name="Abe K."/>
            <person name="Kamihara K."/>
            <person name="Katsuta N."/>
            <person name="Sato K."/>
            <person name="Tanikawa M."/>
            <person name="Yamazaki M."/>
            <person name="Ninomiya K."/>
            <person name="Ishibashi T."/>
            <person name="Yamashita H."/>
            <person name="Murakawa K."/>
            <person name="Fujimori K."/>
            <person name="Tanai H."/>
            <person name="Kimata M."/>
            <person name="Watanabe M."/>
            <person name="Hiraoka S."/>
            <person name="Chiba Y."/>
            <person name="Ishida S."/>
            <person name="Ono Y."/>
            <person name="Takiguchi S."/>
            <person name="Watanabe S."/>
            <person name="Yosida M."/>
            <person name="Hotuta T."/>
            <person name="Kusano J."/>
            <person name="Kanehori K."/>
            <person name="Takahashi-Fujii A."/>
            <person name="Hara H."/>
            <person name="Tanase T.-O."/>
            <person name="Nomura Y."/>
            <person name="Togiya S."/>
            <person name="Komai F."/>
            <person name="Hara R."/>
            <person name="Takeuchi K."/>
            <person name="Arita M."/>
            <person name="Imose N."/>
            <person name="Musashino K."/>
            <person name="Yuuki H."/>
            <person name="Oshima A."/>
            <person name="Sasaki N."/>
            <person name="Aotsuka S."/>
            <person name="Yoshikawa Y."/>
            <person name="Matsunawa H."/>
            <person name="Ichihara T."/>
            <person name="Shiohata N."/>
            <person name="Sano S."/>
            <person name="Moriya S."/>
            <person name="Momiyama H."/>
            <person name="Satoh N."/>
            <person name="Takami S."/>
            <person name="Terashima Y."/>
            <person name="Suzuki O."/>
            <person name="Nakagawa S."/>
            <person name="Senoh A."/>
            <person name="Mizoguchi H."/>
            <person name="Goto Y."/>
            <person name="Shimizu F."/>
            <person name="Wakebe H."/>
            <person name="Hishigaki H."/>
            <person name="Watanabe T."/>
            <person name="Sugiyama A."/>
            <person name="Takemoto M."/>
            <person name="Kawakami B."/>
            <person name="Yamazaki M."/>
            <person name="Watanabe K."/>
            <person name="Kumagai A."/>
            <person name="Itakura S."/>
            <person name="Fukuzumi Y."/>
            <person name="Fujimori Y."/>
            <person name="Komiyama M."/>
            <person name="Tashiro H."/>
            <person name="Tanigami A."/>
            <person name="Fujiwara T."/>
            <person name="Ono T."/>
            <person name="Yamada K."/>
            <person name="Fujii Y."/>
            <person name="Ozaki K."/>
            <person name="Hirao M."/>
            <person name="Ohmori Y."/>
            <person name="Kawabata A."/>
            <person name="Hikiji T."/>
            <person name="Kobatake N."/>
            <person name="Inagaki H."/>
            <person name="Ikema Y."/>
            <person name="Okamoto S."/>
            <person name="Okitani R."/>
            <person name="Kawakami T."/>
            <person name="Noguchi S."/>
            <person name="Itoh T."/>
            <person name="Shigeta K."/>
            <person name="Senba T."/>
            <person name="Matsumura K."/>
            <person name="Nakajima Y."/>
            <person name="Mizuno T."/>
            <person name="Morinaga M."/>
            <person name="Sasaki M."/>
            <person name="Togashi T."/>
            <person name="Oyama M."/>
            <person name="Hata H."/>
            <person name="Watanabe M."/>
            <person name="Komatsu T."/>
            <person name="Mizushima-Sugano J."/>
            <person name="Satoh T."/>
            <person name="Shirai Y."/>
            <person name="Takahashi Y."/>
            <person name="Nakagawa K."/>
            <person name="Okumura K."/>
            <person name="Nagase T."/>
            <person name="Nomura N."/>
            <person name="Kikuchi H."/>
            <person name="Masuho Y."/>
            <person name="Yamashita R."/>
            <person name="Nakai K."/>
            <person name="Yada T."/>
            <person name="Nakamura Y."/>
            <person name="Ohara O."/>
            <person name="Isogai T."/>
            <person name="Sugano S."/>
        </authorList>
    </citation>
    <scope>NUCLEOTIDE SEQUENCE [LARGE SCALE MRNA] (ISOFORM 2)</scope>
    <source>
        <tissue>Umbilical cord blood</tissue>
    </source>
</reference>
<reference key="3">
    <citation type="submission" date="2005-04" db="EMBL/GenBank/DDBJ databases">
        <authorList>
            <person name="Totoki Y."/>
            <person name="Toyoda A."/>
            <person name="Takeda T."/>
            <person name="Sakaki Y."/>
            <person name="Tanaka A."/>
            <person name="Yokoyama S."/>
        </authorList>
    </citation>
    <scope>NUCLEOTIDE SEQUENCE [LARGE SCALE MRNA] (ISOFORM 1)</scope>
    <source>
        <tissue>Synovial cell</tissue>
    </source>
</reference>
<reference key="4">
    <citation type="journal article" date="2003" name="Nature">
        <title>The DNA sequence of human chromosome 7.</title>
        <authorList>
            <person name="Hillier L.W."/>
            <person name="Fulton R.S."/>
            <person name="Fulton L.A."/>
            <person name="Graves T.A."/>
            <person name="Pepin K.H."/>
            <person name="Wagner-McPherson C."/>
            <person name="Layman D."/>
            <person name="Maas J."/>
            <person name="Jaeger S."/>
            <person name="Walker R."/>
            <person name="Wylie K."/>
            <person name="Sekhon M."/>
            <person name="Becker M.C."/>
            <person name="O'Laughlin M.D."/>
            <person name="Schaller M.E."/>
            <person name="Fewell G.A."/>
            <person name="Delehaunty K.D."/>
            <person name="Miner T.L."/>
            <person name="Nash W.E."/>
            <person name="Cordes M."/>
            <person name="Du H."/>
            <person name="Sun H."/>
            <person name="Edwards J."/>
            <person name="Bradshaw-Cordum H."/>
            <person name="Ali J."/>
            <person name="Andrews S."/>
            <person name="Isak A."/>
            <person name="Vanbrunt A."/>
            <person name="Nguyen C."/>
            <person name="Du F."/>
            <person name="Lamar B."/>
            <person name="Courtney L."/>
            <person name="Kalicki J."/>
            <person name="Ozersky P."/>
            <person name="Bielicki L."/>
            <person name="Scott K."/>
            <person name="Holmes A."/>
            <person name="Harkins R."/>
            <person name="Harris A."/>
            <person name="Strong C.M."/>
            <person name="Hou S."/>
            <person name="Tomlinson C."/>
            <person name="Dauphin-Kohlberg S."/>
            <person name="Kozlowicz-Reilly A."/>
            <person name="Leonard S."/>
            <person name="Rohlfing T."/>
            <person name="Rock S.M."/>
            <person name="Tin-Wollam A.-M."/>
            <person name="Abbott A."/>
            <person name="Minx P."/>
            <person name="Maupin R."/>
            <person name="Strowmatt C."/>
            <person name="Latreille P."/>
            <person name="Miller N."/>
            <person name="Johnson D."/>
            <person name="Murray J."/>
            <person name="Woessner J.P."/>
            <person name="Wendl M.C."/>
            <person name="Yang S.-P."/>
            <person name="Schultz B.R."/>
            <person name="Wallis J.W."/>
            <person name="Spieth J."/>
            <person name="Bieri T.A."/>
            <person name="Nelson J.O."/>
            <person name="Berkowicz N."/>
            <person name="Wohldmann P.E."/>
            <person name="Cook L.L."/>
            <person name="Hickenbotham M.T."/>
            <person name="Eldred J."/>
            <person name="Williams D."/>
            <person name="Bedell J.A."/>
            <person name="Mardis E.R."/>
            <person name="Clifton S.W."/>
            <person name="Chissoe S.L."/>
            <person name="Marra M.A."/>
            <person name="Raymond C."/>
            <person name="Haugen E."/>
            <person name="Gillett W."/>
            <person name="Zhou Y."/>
            <person name="James R."/>
            <person name="Phelps K."/>
            <person name="Iadanoto S."/>
            <person name="Bubb K."/>
            <person name="Simms E."/>
            <person name="Levy R."/>
            <person name="Clendenning J."/>
            <person name="Kaul R."/>
            <person name="Kent W.J."/>
            <person name="Furey T.S."/>
            <person name="Baertsch R.A."/>
            <person name="Brent M.R."/>
            <person name="Keibler E."/>
            <person name="Flicek P."/>
            <person name="Bork P."/>
            <person name="Suyama M."/>
            <person name="Bailey J.A."/>
            <person name="Portnoy M.E."/>
            <person name="Torrents D."/>
            <person name="Chinwalla A.T."/>
            <person name="Gish W.R."/>
            <person name="Eddy S.R."/>
            <person name="McPherson J.D."/>
            <person name="Olson M.V."/>
            <person name="Eichler E.E."/>
            <person name="Green E.D."/>
            <person name="Waterston R.H."/>
            <person name="Wilson R.K."/>
        </authorList>
    </citation>
    <scope>NUCLEOTIDE SEQUENCE [LARGE SCALE GENOMIC DNA]</scope>
</reference>
<reference key="5">
    <citation type="journal article" date="2003" name="Science">
        <title>Human chromosome 7: DNA sequence and biology.</title>
        <authorList>
            <person name="Scherer S.W."/>
            <person name="Cheung J."/>
            <person name="MacDonald J.R."/>
            <person name="Osborne L.R."/>
            <person name="Nakabayashi K."/>
            <person name="Herbrick J.-A."/>
            <person name="Carson A.R."/>
            <person name="Parker-Katiraee L."/>
            <person name="Skaug J."/>
            <person name="Khaja R."/>
            <person name="Zhang J."/>
            <person name="Hudek A.K."/>
            <person name="Li M."/>
            <person name="Haddad M."/>
            <person name="Duggan G.E."/>
            <person name="Fernandez B.A."/>
            <person name="Kanematsu E."/>
            <person name="Gentles S."/>
            <person name="Christopoulos C.C."/>
            <person name="Choufani S."/>
            <person name="Kwasnicka D."/>
            <person name="Zheng X.H."/>
            <person name="Lai Z."/>
            <person name="Nusskern D.R."/>
            <person name="Zhang Q."/>
            <person name="Gu Z."/>
            <person name="Lu F."/>
            <person name="Zeesman S."/>
            <person name="Nowaczyk M.J."/>
            <person name="Teshima I."/>
            <person name="Chitayat D."/>
            <person name="Shuman C."/>
            <person name="Weksberg R."/>
            <person name="Zackai E.H."/>
            <person name="Grebe T.A."/>
            <person name="Cox S.R."/>
            <person name="Kirkpatrick S.J."/>
            <person name="Rahman N."/>
            <person name="Friedman J.M."/>
            <person name="Heng H.H.Q."/>
            <person name="Pelicci P.G."/>
            <person name="Lo-Coco F."/>
            <person name="Belloni E."/>
            <person name="Shaffer L.G."/>
            <person name="Pober B."/>
            <person name="Morton C.C."/>
            <person name="Gusella J.F."/>
            <person name="Bruns G.A.P."/>
            <person name="Korf B.R."/>
            <person name="Quade B.J."/>
            <person name="Ligon A.H."/>
            <person name="Ferguson H."/>
            <person name="Higgins A.W."/>
            <person name="Leach N.T."/>
            <person name="Herrick S.R."/>
            <person name="Lemyre E."/>
            <person name="Farra C.G."/>
            <person name="Kim H.-G."/>
            <person name="Summers A.M."/>
            <person name="Gripp K.W."/>
            <person name="Roberts W."/>
            <person name="Szatmari P."/>
            <person name="Winsor E.J.T."/>
            <person name="Grzeschik K.-H."/>
            <person name="Teebi A."/>
            <person name="Minassian B.A."/>
            <person name="Kere J."/>
            <person name="Armengol L."/>
            <person name="Pujana M.A."/>
            <person name="Estivill X."/>
            <person name="Wilson M.D."/>
            <person name="Koop B.F."/>
            <person name="Tosi S."/>
            <person name="Moore G.E."/>
            <person name="Boright A.P."/>
            <person name="Zlotorynski E."/>
            <person name="Kerem B."/>
            <person name="Kroisel P.M."/>
            <person name="Petek E."/>
            <person name="Oscier D.G."/>
            <person name="Mould S.J."/>
            <person name="Doehner H."/>
            <person name="Doehner K."/>
            <person name="Rommens J.M."/>
            <person name="Vincent J.B."/>
            <person name="Venter J.C."/>
            <person name="Li P.W."/>
            <person name="Mural R.J."/>
            <person name="Adams M.D."/>
            <person name="Tsui L.-C."/>
        </authorList>
    </citation>
    <scope>NUCLEOTIDE SEQUENCE [LARGE SCALE GENOMIC DNA]</scope>
    <scope>VARIANT ASN-28</scope>
</reference>
<reference key="6">
    <citation type="submission" date="2005-07" db="EMBL/GenBank/DDBJ databases">
        <authorList>
            <person name="Mural R.J."/>
            <person name="Istrail S."/>
            <person name="Sutton G.G."/>
            <person name="Florea L."/>
            <person name="Halpern A.L."/>
            <person name="Mobarry C.M."/>
            <person name="Lippert R."/>
            <person name="Walenz B."/>
            <person name="Shatkay H."/>
            <person name="Dew I."/>
            <person name="Miller J.R."/>
            <person name="Flanigan M.J."/>
            <person name="Edwards N.J."/>
            <person name="Bolanos R."/>
            <person name="Fasulo D."/>
            <person name="Halldorsson B.V."/>
            <person name="Hannenhalli S."/>
            <person name="Turner R."/>
            <person name="Yooseph S."/>
            <person name="Lu F."/>
            <person name="Nusskern D.R."/>
            <person name="Shue B.C."/>
            <person name="Zheng X.H."/>
            <person name="Zhong F."/>
            <person name="Delcher A.L."/>
            <person name="Huson D.H."/>
            <person name="Kravitz S.A."/>
            <person name="Mouchard L."/>
            <person name="Reinert K."/>
            <person name="Remington K.A."/>
            <person name="Clark A.G."/>
            <person name="Waterman M.S."/>
            <person name="Eichler E.E."/>
            <person name="Adams M.D."/>
            <person name="Hunkapiller M.W."/>
            <person name="Myers E.W."/>
            <person name="Venter J.C."/>
        </authorList>
    </citation>
    <scope>NUCLEOTIDE SEQUENCE [LARGE SCALE GENOMIC DNA]</scope>
    <scope>VARIANT ASN-28</scope>
</reference>
<reference key="7">
    <citation type="journal article" date="2004" name="Genome Res.">
        <title>The status, quality, and expansion of the NIH full-length cDNA project: the Mammalian Gene Collection (MGC).</title>
        <authorList>
            <consortium name="The MGC Project Team"/>
        </authorList>
    </citation>
    <scope>NUCLEOTIDE SEQUENCE [LARGE SCALE MRNA] (ISOFORM 1)</scope>
    <source>
        <tissue>Pancreas</tissue>
    </source>
</reference>
<reference key="8">
    <citation type="journal article" date="1994" name="J. Biol. Chem.">
        <title>A saposin-like domain influences the intracellular localization, stability, and catalytic activity of human acyloxyacyl hydrolase.</title>
        <authorList>
            <person name="Staab J.F."/>
            <person name="Ginkel D.L."/>
            <person name="Rosenberg G.B."/>
            <person name="Munford R.S."/>
        </authorList>
    </citation>
    <scope>FUNCTION</scope>
    <scope>CATALYTIC ACTIVITY</scope>
    <scope>SUBUNIT</scope>
    <scope>PROTEOLYTIC CLEAVAGE</scope>
    <scope>SUBCELLULAR LOCATION</scope>
    <scope>SIGNAL SEQUENCE CLEAVAGE SITE</scope>
    <scope>GLYCOSYLATION AT ASN-59</scope>
    <scope>MUTAGENESIS OF THR-61; SER-263; GLY-372 AND PRO-419</scope>
</reference>
<reference evidence="15 16" key="9">
    <citation type="journal article" date="2018" name="Proc. Natl. Acad. Sci. U.S.A.">
        <title>Crystal structure of the mammalian lipopolysaccharide detoxifier.</title>
        <authorList>
            <person name="Gorelik A."/>
            <person name="Illes K."/>
            <person name="Nagar B."/>
        </authorList>
    </citation>
    <scope>X-RAY CRYSTALLOGRAPHY (2.23 ANGSTROMS) OF 24-152 AND 153-575 OF MUTANT ALA-263 IN COMPLEXES WITH CALCIUM; BACTERIAL LIPOPOLYSACCHARIDE CLEAVAGE PRODUCTS</scope>
    <scope>FUNCTION</scope>
    <scope>CATALYTIC ACTIVITY</scope>
    <scope>ACTIVE SITE</scope>
    <scope>MUTAGENESIS OF LYS-173; SER-263; ARG-345 AND LYS-379</scope>
    <scope>SUBUNIT</scope>
    <scope>GLYCOSYLATION AT ASN-59; ASN-207; ASN-409 AND ASN-466</scope>
    <scope>DISULFIDE BONDS</scope>
    <scope>PROTEOLYTIC CLEAVAGE</scope>
    <scope>ACTIVITY REGULATION</scope>
</reference>